<protein>
    <recommendedName>
        <fullName>Monothiol glutaredoxin-S4</fullName>
        <shortName>AtGrxS4</shortName>
    </recommendedName>
    <alternativeName>
        <fullName>Protein ROXY 13</fullName>
    </alternativeName>
</protein>
<proteinExistence type="inferred from homology"/>
<dbReference type="EMBL" id="FJ611913">
    <property type="protein sequence ID" value="ACO50418.1"/>
    <property type="molecule type" value="mRNA"/>
</dbReference>
<dbReference type="EMBL" id="Z97339">
    <property type="protein sequence ID" value="CAB10346.1"/>
    <property type="molecule type" value="Genomic_DNA"/>
</dbReference>
<dbReference type="EMBL" id="AL161542">
    <property type="protein sequence ID" value="CAB78610.1"/>
    <property type="molecule type" value="Genomic_DNA"/>
</dbReference>
<dbReference type="EMBL" id="CP002687">
    <property type="protein sequence ID" value="AEE83635.1"/>
    <property type="molecule type" value="Genomic_DNA"/>
</dbReference>
<dbReference type="EMBL" id="BT024665">
    <property type="protein sequence ID" value="ABD57490.1"/>
    <property type="molecule type" value="mRNA"/>
</dbReference>
<dbReference type="EMBL" id="AY087144">
    <property type="protein sequence ID" value="AAM64702.1"/>
    <property type="molecule type" value="mRNA"/>
</dbReference>
<dbReference type="PIR" id="H71421">
    <property type="entry name" value="H71421"/>
</dbReference>
<dbReference type="RefSeq" id="NP_193303.1">
    <property type="nucleotide sequence ID" value="NM_117659.2"/>
</dbReference>
<dbReference type="SMR" id="O23419"/>
<dbReference type="FunCoup" id="O23419">
    <property type="interactions" value="29"/>
</dbReference>
<dbReference type="STRING" id="3702.O23419"/>
<dbReference type="PaxDb" id="3702-AT4G15680.1"/>
<dbReference type="EnsemblPlants" id="AT4G15680.1">
    <property type="protein sequence ID" value="AT4G15680.1"/>
    <property type="gene ID" value="AT4G15680"/>
</dbReference>
<dbReference type="GeneID" id="827245"/>
<dbReference type="Gramene" id="AT4G15680.1">
    <property type="protein sequence ID" value="AT4G15680.1"/>
    <property type="gene ID" value="AT4G15680"/>
</dbReference>
<dbReference type="KEGG" id="ath:AT4G15680"/>
<dbReference type="Araport" id="AT4G15680"/>
<dbReference type="TAIR" id="AT4G15680">
    <property type="gene designation" value="GRXS4"/>
</dbReference>
<dbReference type="eggNOG" id="KOG1752">
    <property type="taxonomic scope" value="Eukaryota"/>
</dbReference>
<dbReference type="HOGENOM" id="CLU_026126_6_0_1"/>
<dbReference type="InParanoid" id="O23419"/>
<dbReference type="OMA" id="NAICDLR"/>
<dbReference type="OrthoDB" id="418495at2759"/>
<dbReference type="PhylomeDB" id="O23419"/>
<dbReference type="PRO" id="PR:O23419"/>
<dbReference type="Proteomes" id="UP000006548">
    <property type="component" value="Chromosome 4"/>
</dbReference>
<dbReference type="ExpressionAtlas" id="O23419">
    <property type="expression patterns" value="baseline and differential"/>
</dbReference>
<dbReference type="GO" id="GO:0005737">
    <property type="term" value="C:cytoplasm"/>
    <property type="evidence" value="ECO:0007669"/>
    <property type="project" value="UniProtKB-SubCell"/>
</dbReference>
<dbReference type="GO" id="GO:0005634">
    <property type="term" value="C:nucleus"/>
    <property type="evidence" value="ECO:0007669"/>
    <property type="project" value="UniProtKB-SubCell"/>
</dbReference>
<dbReference type="GO" id="GO:0051537">
    <property type="term" value="F:2 iron, 2 sulfur cluster binding"/>
    <property type="evidence" value="ECO:0007669"/>
    <property type="project" value="UniProtKB-KW"/>
</dbReference>
<dbReference type="GO" id="GO:0046872">
    <property type="term" value="F:metal ion binding"/>
    <property type="evidence" value="ECO:0007669"/>
    <property type="project" value="UniProtKB-KW"/>
</dbReference>
<dbReference type="GO" id="GO:0010167">
    <property type="term" value="P:response to nitrate"/>
    <property type="evidence" value="ECO:0000270"/>
    <property type="project" value="TAIR"/>
</dbReference>
<dbReference type="CDD" id="cd03419">
    <property type="entry name" value="GRX_GRXh_1_2_like"/>
    <property type="match status" value="1"/>
</dbReference>
<dbReference type="FunFam" id="3.40.30.10:FF:000028">
    <property type="entry name" value="Glutaredoxin family protein"/>
    <property type="match status" value="1"/>
</dbReference>
<dbReference type="Gene3D" id="3.40.30.10">
    <property type="entry name" value="Glutaredoxin"/>
    <property type="match status" value="1"/>
</dbReference>
<dbReference type="InterPro" id="IPR011905">
    <property type="entry name" value="GlrX-like_pln_2"/>
</dbReference>
<dbReference type="InterPro" id="IPR002109">
    <property type="entry name" value="Glutaredoxin"/>
</dbReference>
<dbReference type="InterPro" id="IPR014025">
    <property type="entry name" value="Glutaredoxin_subgr"/>
</dbReference>
<dbReference type="InterPro" id="IPR036249">
    <property type="entry name" value="Thioredoxin-like_sf"/>
</dbReference>
<dbReference type="NCBIfam" id="TIGR02189">
    <property type="entry name" value="GlrX-like_plant"/>
    <property type="match status" value="1"/>
</dbReference>
<dbReference type="PANTHER" id="PTHR10168">
    <property type="entry name" value="GLUTAREDOXIN"/>
    <property type="match status" value="1"/>
</dbReference>
<dbReference type="Pfam" id="PF00462">
    <property type="entry name" value="Glutaredoxin"/>
    <property type="match status" value="1"/>
</dbReference>
<dbReference type="PRINTS" id="PR00160">
    <property type="entry name" value="GLUTAREDOXIN"/>
</dbReference>
<dbReference type="SUPFAM" id="SSF52833">
    <property type="entry name" value="Thioredoxin-like"/>
    <property type="match status" value="1"/>
</dbReference>
<dbReference type="PROSITE" id="PS51354">
    <property type="entry name" value="GLUTAREDOXIN_2"/>
    <property type="match status" value="1"/>
</dbReference>
<reference key="1">
    <citation type="journal article" date="2009" name="Plant Cell">
        <title>Nuclear activity of ROXY1, a glutaredoxin interacting with TGA factors, is required for petal development in Arabidopsis thaliana.</title>
        <authorList>
            <person name="Li S."/>
            <person name="Lauri A."/>
            <person name="Ziemann M."/>
            <person name="Busch A."/>
            <person name="Bhave M."/>
            <person name="Zachgo S."/>
        </authorList>
    </citation>
    <scope>NUCLEOTIDE SEQUENCE [MRNA]</scope>
    <scope>GENE FAMILY</scope>
</reference>
<reference key="2">
    <citation type="journal article" date="1998" name="Nature">
        <title>Analysis of 1.9 Mb of contiguous sequence from chromosome 4 of Arabidopsis thaliana.</title>
        <authorList>
            <person name="Bevan M."/>
            <person name="Bancroft I."/>
            <person name="Bent E."/>
            <person name="Love K."/>
            <person name="Goodman H.M."/>
            <person name="Dean C."/>
            <person name="Bergkamp R."/>
            <person name="Dirkse W."/>
            <person name="van Staveren M."/>
            <person name="Stiekema W."/>
            <person name="Drost L."/>
            <person name="Ridley P."/>
            <person name="Hudson S.-A."/>
            <person name="Patel K."/>
            <person name="Murphy G."/>
            <person name="Piffanelli P."/>
            <person name="Wedler H."/>
            <person name="Wedler E."/>
            <person name="Wambutt R."/>
            <person name="Weitzenegger T."/>
            <person name="Pohl T."/>
            <person name="Terryn N."/>
            <person name="Gielen J."/>
            <person name="Villarroel R."/>
            <person name="De Clercq R."/>
            <person name="van Montagu M."/>
            <person name="Lecharny A."/>
            <person name="Aubourg S."/>
            <person name="Gy I."/>
            <person name="Kreis M."/>
            <person name="Lao N."/>
            <person name="Kavanagh T."/>
            <person name="Hempel S."/>
            <person name="Kotter P."/>
            <person name="Entian K.-D."/>
            <person name="Rieger M."/>
            <person name="Schaefer M."/>
            <person name="Funk B."/>
            <person name="Mueller-Auer S."/>
            <person name="Silvey M."/>
            <person name="James R."/>
            <person name="Monfort A."/>
            <person name="Pons A."/>
            <person name="Puigdomenech P."/>
            <person name="Douka A."/>
            <person name="Voukelatou E."/>
            <person name="Milioni D."/>
            <person name="Hatzopoulos P."/>
            <person name="Piravandi E."/>
            <person name="Obermaier B."/>
            <person name="Hilbert H."/>
            <person name="Duesterhoeft A."/>
            <person name="Moores T."/>
            <person name="Jones J.D.G."/>
            <person name="Eneva T."/>
            <person name="Palme K."/>
            <person name="Benes V."/>
            <person name="Rechmann S."/>
            <person name="Ansorge W."/>
            <person name="Cooke R."/>
            <person name="Berger C."/>
            <person name="Delseny M."/>
            <person name="Voet M."/>
            <person name="Volckaert G."/>
            <person name="Mewes H.-W."/>
            <person name="Klosterman S."/>
            <person name="Schueller C."/>
            <person name="Chalwatzis N."/>
        </authorList>
    </citation>
    <scope>NUCLEOTIDE SEQUENCE [LARGE SCALE GENOMIC DNA]</scope>
    <source>
        <strain>cv. Columbia</strain>
    </source>
</reference>
<reference key="3">
    <citation type="journal article" date="1999" name="Nature">
        <title>Sequence and analysis of chromosome 4 of the plant Arabidopsis thaliana.</title>
        <authorList>
            <person name="Mayer K.F.X."/>
            <person name="Schueller C."/>
            <person name="Wambutt R."/>
            <person name="Murphy G."/>
            <person name="Volckaert G."/>
            <person name="Pohl T."/>
            <person name="Duesterhoeft A."/>
            <person name="Stiekema W."/>
            <person name="Entian K.-D."/>
            <person name="Terryn N."/>
            <person name="Harris B."/>
            <person name="Ansorge W."/>
            <person name="Brandt P."/>
            <person name="Grivell L.A."/>
            <person name="Rieger M."/>
            <person name="Weichselgartner M."/>
            <person name="de Simone V."/>
            <person name="Obermaier B."/>
            <person name="Mache R."/>
            <person name="Mueller M."/>
            <person name="Kreis M."/>
            <person name="Delseny M."/>
            <person name="Puigdomenech P."/>
            <person name="Watson M."/>
            <person name="Schmidtheini T."/>
            <person name="Reichert B."/>
            <person name="Portetelle D."/>
            <person name="Perez-Alonso M."/>
            <person name="Boutry M."/>
            <person name="Bancroft I."/>
            <person name="Vos P."/>
            <person name="Hoheisel J."/>
            <person name="Zimmermann W."/>
            <person name="Wedler H."/>
            <person name="Ridley P."/>
            <person name="Langham S.-A."/>
            <person name="McCullagh B."/>
            <person name="Bilham L."/>
            <person name="Robben J."/>
            <person name="van der Schueren J."/>
            <person name="Grymonprez B."/>
            <person name="Chuang Y.-J."/>
            <person name="Vandenbussche F."/>
            <person name="Braeken M."/>
            <person name="Weltjens I."/>
            <person name="Voet M."/>
            <person name="Bastiaens I."/>
            <person name="Aert R."/>
            <person name="Defoor E."/>
            <person name="Weitzenegger T."/>
            <person name="Bothe G."/>
            <person name="Ramsperger U."/>
            <person name="Hilbert H."/>
            <person name="Braun M."/>
            <person name="Holzer E."/>
            <person name="Brandt A."/>
            <person name="Peters S."/>
            <person name="van Staveren M."/>
            <person name="Dirkse W."/>
            <person name="Mooijman P."/>
            <person name="Klein Lankhorst R."/>
            <person name="Rose M."/>
            <person name="Hauf J."/>
            <person name="Koetter P."/>
            <person name="Berneiser S."/>
            <person name="Hempel S."/>
            <person name="Feldpausch M."/>
            <person name="Lamberth S."/>
            <person name="Van den Daele H."/>
            <person name="De Keyser A."/>
            <person name="Buysshaert C."/>
            <person name="Gielen J."/>
            <person name="Villarroel R."/>
            <person name="De Clercq R."/>
            <person name="van Montagu M."/>
            <person name="Rogers J."/>
            <person name="Cronin A."/>
            <person name="Quail M.A."/>
            <person name="Bray-Allen S."/>
            <person name="Clark L."/>
            <person name="Doggett J."/>
            <person name="Hall S."/>
            <person name="Kay M."/>
            <person name="Lennard N."/>
            <person name="McLay K."/>
            <person name="Mayes R."/>
            <person name="Pettett A."/>
            <person name="Rajandream M.A."/>
            <person name="Lyne M."/>
            <person name="Benes V."/>
            <person name="Rechmann S."/>
            <person name="Borkova D."/>
            <person name="Bloecker H."/>
            <person name="Scharfe M."/>
            <person name="Grimm M."/>
            <person name="Loehnert T.-H."/>
            <person name="Dose S."/>
            <person name="de Haan M."/>
            <person name="Maarse A.C."/>
            <person name="Schaefer M."/>
            <person name="Mueller-Auer S."/>
            <person name="Gabel C."/>
            <person name="Fuchs M."/>
            <person name="Fartmann B."/>
            <person name="Granderath K."/>
            <person name="Dauner D."/>
            <person name="Herzl A."/>
            <person name="Neumann S."/>
            <person name="Argiriou A."/>
            <person name="Vitale D."/>
            <person name="Liguori R."/>
            <person name="Piravandi E."/>
            <person name="Massenet O."/>
            <person name="Quigley F."/>
            <person name="Clabauld G."/>
            <person name="Muendlein A."/>
            <person name="Felber R."/>
            <person name="Schnabl S."/>
            <person name="Hiller R."/>
            <person name="Schmidt W."/>
            <person name="Lecharny A."/>
            <person name="Aubourg S."/>
            <person name="Chefdor F."/>
            <person name="Cooke R."/>
            <person name="Berger C."/>
            <person name="Monfort A."/>
            <person name="Casacuberta E."/>
            <person name="Gibbons T."/>
            <person name="Weber N."/>
            <person name="Vandenbol M."/>
            <person name="Bargues M."/>
            <person name="Terol J."/>
            <person name="Torres A."/>
            <person name="Perez-Perez A."/>
            <person name="Purnelle B."/>
            <person name="Bent E."/>
            <person name="Johnson S."/>
            <person name="Tacon D."/>
            <person name="Jesse T."/>
            <person name="Heijnen L."/>
            <person name="Schwarz S."/>
            <person name="Scholler P."/>
            <person name="Heber S."/>
            <person name="Francs P."/>
            <person name="Bielke C."/>
            <person name="Frishman D."/>
            <person name="Haase D."/>
            <person name="Lemcke K."/>
            <person name="Mewes H.-W."/>
            <person name="Stocker S."/>
            <person name="Zaccaria P."/>
            <person name="Bevan M."/>
            <person name="Wilson R.K."/>
            <person name="de la Bastide M."/>
            <person name="Habermann K."/>
            <person name="Parnell L."/>
            <person name="Dedhia N."/>
            <person name="Gnoj L."/>
            <person name="Schutz K."/>
            <person name="Huang E."/>
            <person name="Spiegel L."/>
            <person name="Sekhon M."/>
            <person name="Murray J."/>
            <person name="Sheet P."/>
            <person name="Cordes M."/>
            <person name="Abu-Threideh J."/>
            <person name="Stoneking T."/>
            <person name="Kalicki J."/>
            <person name="Graves T."/>
            <person name="Harmon G."/>
            <person name="Edwards J."/>
            <person name="Latreille P."/>
            <person name="Courtney L."/>
            <person name="Cloud J."/>
            <person name="Abbott A."/>
            <person name="Scott K."/>
            <person name="Johnson D."/>
            <person name="Minx P."/>
            <person name="Bentley D."/>
            <person name="Fulton B."/>
            <person name="Miller N."/>
            <person name="Greco T."/>
            <person name="Kemp K."/>
            <person name="Kramer J."/>
            <person name="Fulton L."/>
            <person name="Mardis E."/>
            <person name="Dante M."/>
            <person name="Pepin K."/>
            <person name="Hillier L.W."/>
            <person name="Nelson J."/>
            <person name="Spieth J."/>
            <person name="Ryan E."/>
            <person name="Andrews S."/>
            <person name="Geisel C."/>
            <person name="Layman D."/>
            <person name="Du H."/>
            <person name="Ali J."/>
            <person name="Berghoff A."/>
            <person name="Jones K."/>
            <person name="Drone K."/>
            <person name="Cotton M."/>
            <person name="Joshu C."/>
            <person name="Antonoiu B."/>
            <person name="Zidanic M."/>
            <person name="Strong C."/>
            <person name="Sun H."/>
            <person name="Lamar B."/>
            <person name="Yordan C."/>
            <person name="Ma P."/>
            <person name="Zhong J."/>
            <person name="Preston R."/>
            <person name="Vil D."/>
            <person name="Shekher M."/>
            <person name="Matero A."/>
            <person name="Shah R."/>
            <person name="Swaby I.K."/>
            <person name="O'Shaughnessy A."/>
            <person name="Rodriguez M."/>
            <person name="Hoffman J."/>
            <person name="Till S."/>
            <person name="Granat S."/>
            <person name="Shohdy N."/>
            <person name="Hasegawa A."/>
            <person name="Hameed A."/>
            <person name="Lodhi M."/>
            <person name="Johnson A."/>
            <person name="Chen E."/>
            <person name="Marra M.A."/>
            <person name="Martienssen R."/>
            <person name="McCombie W.R."/>
        </authorList>
    </citation>
    <scope>NUCLEOTIDE SEQUENCE [LARGE SCALE GENOMIC DNA]</scope>
    <source>
        <strain>cv. Columbia</strain>
    </source>
</reference>
<reference key="4">
    <citation type="journal article" date="2017" name="Plant J.">
        <title>Araport11: a complete reannotation of the Arabidopsis thaliana reference genome.</title>
        <authorList>
            <person name="Cheng C.Y."/>
            <person name="Krishnakumar V."/>
            <person name="Chan A.P."/>
            <person name="Thibaud-Nissen F."/>
            <person name="Schobel S."/>
            <person name="Town C.D."/>
        </authorList>
    </citation>
    <scope>GENOME REANNOTATION</scope>
    <source>
        <strain>cv. Columbia</strain>
    </source>
</reference>
<reference key="5">
    <citation type="submission" date="2006-02" db="EMBL/GenBank/DDBJ databases">
        <title>Arabidopsis ORF clones.</title>
        <authorList>
            <person name="Shinn P."/>
            <person name="Chen H."/>
            <person name="Kim C.J."/>
            <person name="Ecker J.R."/>
        </authorList>
    </citation>
    <scope>NUCLEOTIDE SEQUENCE [LARGE SCALE MRNA]</scope>
    <source>
        <strain>cv. Columbia</strain>
    </source>
</reference>
<reference key="6">
    <citation type="submission" date="2002-03" db="EMBL/GenBank/DDBJ databases">
        <title>Full-length cDNA from Arabidopsis thaliana.</title>
        <authorList>
            <person name="Brover V.V."/>
            <person name="Troukhan M.E."/>
            <person name="Alexandrov N.A."/>
            <person name="Lu Y.-P."/>
            <person name="Flavell R.B."/>
            <person name="Feldmann K.A."/>
        </authorList>
    </citation>
    <scope>NUCLEOTIDE SEQUENCE [LARGE SCALE MRNA]</scope>
</reference>
<reference key="7">
    <citation type="journal article" date="2004" name="Cell. Mol. Life Sci.">
        <title>Plant glutaredoxins: still mysterious reducing systems.</title>
        <authorList>
            <person name="Rouhier N."/>
            <person name="Gelhaye E."/>
            <person name="Jacquot J.-P."/>
        </authorList>
    </citation>
    <scope>GENE FAMILY</scope>
    <scope>NOMENCLATURE</scope>
</reference>
<reference key="8">
    <citation type="journal article" date="2006" name="J. Exp. Bot.">
        <title>Genome-wide analysis of plant glutaredoxin systems.</title>
        <authorList>
            <person name="Rouhier N."/>
            <person name="Couturier J."/>
            <person name="Jacquot J.-P."/>
        </authorList>
    </citation>
    <scope>GENE FAMILY</scope>
</reference>
<sequence length="102" mass="11248">MDKLQKMISEKSVVIFSKNSCCMSHTIKTLFIDFGVNPTIYELDEINRGKEIEQALAQLGCSPTVPVVFIGGQLVGGANQVMSLHLNRSLVPMLKRVGALWL</sequence>
<feature type="chain" id="PRO_0000268725" description="Monothiol glutaredoxin-S4">
    <location>
        <begin position="1"/>
        <end position="102"/>
    </location>
</feature>
<feature type="domain" description="Glutaredoxin" evidence="3">
    <location>
        <begin position="1"/>
        <end position="101"/>
    </location>
</feature>
<feature type="short sequence motif" description="Responsive for interaction with TGA factors" evidence="1">
    <location>
        <begin position="99"/>
        <end position="102"/>
    </location>
</feature>
<feature type="binding site" evidence="2">
    <location>
        <position position="21"/>
    </location>
    <ligand>
        <name>[2Fe-2S] cluster</name>
        <dbReference type="ChEBI" id="CHEBI:190135"/>
        <note>ligand shared between dimeric partners</note>
    </ligand>
</feature>
<name>GRXS4_ARATH</name>
<accession>O23419</accession>
<accession>C1JGQ4</accession>
<evidence type="ECO:0000250" key="1"/>
<evidence type="ECO:0000255" key="2"/>
<evidence type="ECO:0000255" key="3">
    <source>
        <dbReference type="PROSITE-ProRule" id="PRU00686"/>
    </source>
</evidence>
<evidence type="ECO:0000305" key="4"/>
<organism>
    <name type="scientific">Arabidopsis thaliana</name>
    <name type="common">Mouse-ear cress</name>
    <dbReference type="NCBI Taxonomy" id="3702"/>
    <lineage>
        <taxon>Eukaryota</taxon>
        <taxon>Viridiplantae</taxon>
        <taxon>Streptophyta</taxon>
        <taxon>Embryophyta</taxon>
        <taxon>Tracheophyta</taxon>
        <taxon>Spermatophyta</taxon>
        <taxon>Magnoliopsida</taxon>
        <taxon>eudicotyledons</taxon>
        <taxon>Gunneridae</taxon>
        <taxon>Pentapetalae</taxon>
        <taxon>rosids</taxon>
        <taxon>malvids</taxon>
        <taxon>Brassicales</taxon>
        <taxon>Brassicaceae</taxon>
        <taxon>Camelineae</taxon>
        <taxon>Arabidopsis</taxon>
    </lineage>
</organism>
<gene>
    <name type="primary">GRXS4</name>
    <name type="synonym">ROXY13</name>
    <name type="ordered locus">At4g15680</name>
    <name type="ORF">dl3880w</name>
    <name type="ORF">FCAALL.384</name>
</gene>
<keyword id="KW-0001">2Fe-2S</keyword>
<keyword id="KW-0963">Cytoplasm</keyword>
<keyword id="KW-0408">Iron</keyword>
<keyword id="KW-0411">Iron-sulfur</keyword>
<keyword id="KW-0479">Metal-binding</keyword>
<keyword id="KW-0539">Nucleus</keyword>
<keyword id="KW-0676">Redox-active center</keyword>
<keyword id="KW-1185">Reference proteome</keyword>
<comment type="function">
    <text evidence="4">May only reduce GSH-thiol disulfides, but not protein disulfides.</text>
</comment>
<comment type="subcellular location">
    <subcellularLocation>
        <location evidence="1">Cytoplasm</location>
    </subcellularLocation>
    <subcellularLocation>
        <location evidence="1">Nucleus</location>
    </subcellularLocation>
</comment>
<comment type="similarity">
    <text evidence="4">Belongs to the glutaredoxin family. CC-type subfamily.</text>
</comment>